<name>EZRA_STRPI</name>
<evidence type="ECO:0000255" key="1">
    <source>
        <dbReference type="HAMAP-Rule" id="MF_00728"/>
    </source>
</evidence>
<sequence>MSNGQLIYLMVAIAVILVLAYVVAIFLRKRNEGRLEALEERKEELYNLPVNDEVEAVKNMHLIGQSQVAFREWNQKWVDLSLNSFADIENNLFEAEGYNHSFRFLKASHQIDQIESQITLIEEDIAAIRNALADLEKQESKNSGRVLHALDLFEELQHRVAENSEQYGQALDEIEKQLENIQSEFSQFVTLNSSGDPVEAAVILDNTENHILALSHIVDRVPALVTTLSTELPDQLQDLEAGYRKLIDANYHFVETDIEARFHLLYEAFKKNQENIRQLELDNAEYENGQAQEEINALYDIFTREIAAQKVVENLLATLPTYLQHMKENNTLLGEDIARLNKTYLLPETAASHVRRIQTELESFEAAIVEVTSNQEEPTQAYSVLEENLEDLQTQLKDIEDEQISVSERLTQIEKDDINARQKANVYVNRLHTIKRYMEKRNLPGIPQTFLKLFFTASNNTEDLMVELEQKMINIESVTRVLEIATNDMEALETETYNIVQYATLTEQLLQYSNRYRSFDERIQEAFNEALDIFEKEFDYHASFDKISQALEVAEPGVTNRFVTSYEKTRETIRF</sequence>
<comment type="function">
    <text evidence="1">Negative regulator of FtsZ ring formation; modulates the frequency and position of FtsZ ring formation. Inhibits FtsZ ring formation at polar sites. Interacts either with FtsZ or with one of its binding partners to promote depolymerization.</text>
</comment>
<comment type="subcellular location">
    <subcellularLocation>
        <location evidence="1">Cell membrane</location>
        <topology evidence="1">Single-pass membrane protein</topology>
    </subcellularLocation>
    <text evidence="1">Colocalized with FtsZ to the nascent septal site.</text>
</comment>
<comment type="similarity">
    <text evidence="1">Belongs to the EzrA family.</text>
</comment>
<protein>
    <recommendedName>
        <fullName evidence="1">Septation ring formation regulator EzrA</fullName>
    </recommendedName>
</protein>
<proteinExistence type="inferred from homology"/>
<keyword id="KW-0131">Cell cycle</keyword>
<keyword id="KW-0132">Cell division</keyword>
<keyword id="KW-1003">Cell membrane</keyword>
<keyword id="KW-0175">Coiled coil</keyword>
<keyword id="KW-0472">Membrane</keyword>
<keyword id="KW-0717">Septation</keyword>
<keyword id="KW-0812">Transmembrane</keyword>
<keyword id="KW-1133">Transmembrane helix</keyword>
<organism>
    <name type="scientific">Streptococcus pneumoniae (strain Hungary19A-6)</name>
    <dbReference type="NCBI Taxonomy" id="487214"/>
    <lineage>
        <taxon>Bacteria</taxon>
        <taxon>Bacillati</taxon>
        <taxon>Bacillota</taxon>
        <taxon>Bacilli</taxon>
        <taxon>Lactobacillales</taxon>
        <taxon>Streptococcaceae</taxon>
        <taxon>Streptococcus</taxon>
    </lineage>
</organism>
<reference key="1">
    <citation type="journal article" date="2010" name="Genome Biol.">
        <title>Structure and dynamics of the pan-genome of Streptococcus pneumoniae and closely related species.</title>
        <authorList>
            <person name="Donati C."/>
            <person name="Hiller N.L."/>
            <person name="Tettelin H."/>
            <person name="Muzzi A."/>
            <person name="Croucher N.J."/>
            <person name="Angiuoli S.V."/>
            <person name="Oggioni M."/>
            <person name="Dunning Hotopp J.C."/>
            <person name="Hu F.Z."/>
            <person name="Riley D.R."/>
            <person name="Covacci A."/>
            <person name="Mitchell T.J."/>
            <person name="Bentley S.D."/>
            <person name="Kilian M."/>
            <person name="Ehrlich G.D."/>
            <person name="Rappuoli R."/>
            <person name="Moxon E.R."/>
            <person name="Masignani V."/>
        </authorList>
    </citation>
    <scope>NUCLEOTIDE SEQUENCE [LARGE SCALE GENOMIC DNA]</scope>
    <source>
        <strain>Hungary19A-6</strain>
    </source>
</reference>
<feature type="chain" id="PRO_1000132709" description="Septation ring formation regulator EzrA">
    <location>
        <begin position="1"/>
        <end position="575"/>
    </location>
</feature>
<feature type="topological domain" description="Extracellular" evidence="1">
    <location>
        <begin position="1"/>
        <end position="8"/>
    </location>
</feature>
<feature type="transmembrane region" description="Helical" evidence="1">
    <location>
        <begin position="9"/>
        <end position="27"/>
    </location>
</feature>
<feature type="topological domain" description="Cytoplasmic" evidence="1">
    <location>
        <begin position="28"/>
        <end position="575"/>
    </location>
</feature>
<feature type="coiled-coil region" evidence="1">
    <location>
        <begin position="105"/>
        <end position="191"/>
    </location>
</feature>
<feature type="coiled-coil region" evidence="1">
    <location>
        <begin position="265"/>
        <end position="301"/>
    </location>
</feature>
<feature type="coiled-coil region" evidence="1">
    <location>
        <begin position="354"/>
        <end position="416"/>
    </location>
</feature>
<feature type="coiled-coil region" evidence="1">
    <location>
        <begin position="456"/>
        <end position="526"/>
    </location>
</feature>
<accession>B1IAY5</accession>
<dbReference type="EMBL" id="CP000936">
    <property type="protein sequence ID" value="ACA36994.1"/>
    <property type="molecule type" value="Genomic_DNA"/>
</dbReference>
<dbReference type="RefSeq" id="WP_000064821.1">
    <property type="nucleotide sequence ID" value="NC_010380.1"/>
</dbReference>
<dbReference type="SMR" id="B1IAY5"/>
<dbReference type="KEGG" id="spv:SPH_0909"/>
<dbReference type="HOGENOM" id="CLU_034079_2_0_9"/>
<dbReference type="Proteomes" id="UP000002163">
    <property type="component" value="Chromosome"/>
</dbReference>
<dbReference type="GO" id="GO:0005886">
    <property type="term" value="C:plasma membrane"/>
    <property type="evidence" value="ECO:0007669"/>
    <property type="project" value="UniProtKB-SubCell"/>
</dbReference>
<dbReference type="GO" id="GO:0005940">
    <property type="term" value="C:septin ring"/>
    <property type="evidence" value="ECO:0007669"/>
    <property type="project" value="InterPro"/>
</dbReference>
<dbReference type="GO" id="GO:0000917">
    <property type="term" value="P:division septum assembly"/>
    <property type="evidence" value="ECO:0007669"/>
    <property type="project" value="UniProtKB-KW"/>
</dbReference>
<dbReference type="GO" id="GO:0000921">
    <property type="term" value="P:septin ring assembly"/>
    <property type="evidence" value="ECO:0007669"/>
    <property type="project" value="InterPro"/>
</dbReference>
<dbReference type="HAMAP" id="MF_00728">
    <property type="entry name" value="EzrA"/>
    <property type="match status" value="1"/>
</dbReference>
<dbReference type="InterPro" id="IPR010379">
    <property type="entry name" value="EzrA"/>
</dbReference>
<dbReference type="NCBIfam" id="NF003410">
    <property type="entry name" value="PRK04778.1-4"/>
    <property type="match status" value="1"/>
</dbReference>
<dbReference type="Pfam" id="PF06160">
    <property type="entry name" value="EzrA"/>
    <property type="match status" value="1"/>
</dbReference>
<gene>
    <name evidence="1" type="primary">ezrA</name>
    <name type="ordered locus">SPH_0909</name>
</gene>